<proteinExistence type="inferred from homology"/>
<feature type="chain" id="PRO_0000151199" description="Undecaprenyl-diphosphatase">
    <location>
        <begin position="1"/>
        <end position="291"/>
    </location>
</feature>
<feature type="transmembrane region" description="Helical" evidence="1">
    <location>
        <begin position="1"/>
        <end position="21"/>
    </location>
</feature>
<feature type="transmembrane region" description="Helical" evidence="1">
    <location>
        <begin position="48"/>
        <end position="68"/>
    </location>
</feature>
<feature type="transmembrane region" description="Helical" evidence="1">
    <location>
        <begin position="102"/>
        <end position="122"/>
    </location>
</feature>
<feature type="transmembrane region" description="Helical" evidence="1">
    <location>
        <begin position="126"/>
        <end position="146"/>
    </location>
</feature>
<feature type="transmembrane region" description="Helical" evidence="1">
    <location>
        <begin position="162"/>
        <end position="182"/>
    </location>
</feature>
<feature type="transmembrane region" description="Helical" evidence="1">
    <location>
        <begin position="203"/>
        <end position="223"/>
    </location>
</feature>
<feature type="transmembrane region" description="Helical" evidence="1">
    <location>
        <begin position="231"/>
        <end position="251"/>
    </location>
</feature>
<feature type="transmembrane region" description="Helical" evidence="1">
    <location>
        <begin position="267"/>
        <end position="287"/>
    </location>
</feature>
<protein>
    <recommendedName>
        <fullName evidence="1">Undecaprenyl-diphosphatase</fullName>
        <ecNumber evidence="1">3.6.1.27</ecNumber>
    </recommendedName>
    <alternativeName>
        <fullName evidence="1">Bacitracin resistance protein</fullName>
    </alternativeName>
    <alternativeName>
        <fullName evidence="1">Undecaprenyl pyrophosphate phosphatase</fullName>
    </alternativeName>
</protein>
<comment type="function">
    <text evidence="1">Catalyzes the dephosphorylation of undecaprenyl diphosphate (UPP). Confers resistance to bacitracin.</text>
</comment>
<comment type="catalytic activity">
    <reaction evidence="1">
        <text>di-trans,octa-cis-undecaprenyl diphosphate + H2O = di-trans,octa-cis-undecaprenyl phosphate + phosphate + H(+)</text>
        <dbReference type="Rhea" id="RHEA:28094"/>
        <dbReference type="ChEBI" id="CHEBI:15377"/>
        <dbReference type="ChEBI" id="CHEBI:15378"/>
        <dbReference type="ChEBI" id="CHEBI:43474"/>
        <dbReference type="ChEBI" id="CHEBI:58405"/>
        <dbReference type="ChEBI" id="CHEBI:60392"/>
        <dbReference type="EC" id="3.6.1.27"/>
    </reaction>
</comment>
<comment type="subcellular location">
    <subcellularLocation>
        <location evidence="1">Cell membrane</location>
        <topology evidence="1">Multi-pass membrane protein</topology>
    </subcellularLocation>
</comment>
<comment type="miscellaneous">
    <text>Bacitracin is thought to be involved in the inhibition of peptidoglycan synthesis by sequestering undecaprenyl diphosphate, thereby reducing the pool of lipid carrier available.</text>
</comment>
<comment type="similarity">
    <text evidence="1">Belongs to the UppP family.</text>
</comment>
<sequence>MFIIELIKGIILGVVEGLTEFAPVSSTGHMILVDDMWLKSSEFLGSQSAFTFKIVIQLGSVFAAAWVFRERFLEILHIGKHKHVEGENDQQRRSKPRRLNLLHVLVGMVPAGILGLLFDDFIEEHLFSVPTVMIGLFVGAIYMIIADKYSVKVKNPQTVDQINYFQAFVIGISQAVAMWPGFSRSGSTISTGVLMKLNHKAASDFTFIMAVPIMLAASGLSLLKHYQDIQIADIPFYILGFLAAFTVGLIAIKTFLHLINKIKLIPFAIYRIVLVIFIAILYFGFGIGKGI</sequence>
<keyword id="KW-0046">Antibiotic resistance</keyword>
<keyword id="KW-1003">Cell membrane</keyword>
<keyword id="KW-0133">Cell shape</keyword>
<keyword id="KW-0961">Cell wall biogenesis/degradation</keyword>
<keyword id="KW-0378">Hydrolase</keyword>
<keyword id="KW-0472">Membrane</keyword>
<keyword id="KW-0573">Peptidoglycan synthesis</keyword>
<keyword id="KW-0812">Transmembrane</keyword>
<keyword id="KW-1133">Transmembrane helix</keyword>
<name>UPPP_STAAM</name>
<evidence type="ECO:0000255" key="1">
    <source>
        <dbReference type="HAMAP-Rule" id="MF_01006"/>
    </source>
</evidence>
<dbReference type="EC" id="3.6.1.27" evidence="1"/>
<dbReference type="EMBL" id="BA000017">
    <property type="protein sequence ID" value="BAB56845.1"/>
    <property type="molecule type" value="Genomic_DNA"/>
</dbReference>
<dbReference type="RefSeq" id="WP_000469894.1">
    <property type="nucleotide sequence ID" value="NC_002758.2"/>
</dbReference>
<dbReference type="SMR" id="P67390"/>
<dbReference type="KEGG" id="sav:SAV0683"/>
<dbReference type="HOGENOM" id="CLU_060296_2_0_9"/>
<dbReference type="PhylomeDB" id="P67390"/>
<dbReference type="Proteomes" id="UP000002481">
    <property type="component" value="Chromosome"/>
</dbReference>
<dbReference type="GO" id="GO:0005886">
    <property type="term" value="C:plasma membrane"/>
    <property type="evidence" value="ECO:0007669"/>
    <property type="project" value="UniProtKB-SubCell"/>
</dbReference>
<dbReference type="GO" id="GO:0050380">
    <property type="term" value="F:undecaprenyl-diphosphatase activity"/>
    <property type="evidence" value="ECO:0007669"/>
    <property type="project" value="UniProtKB-UniRule"/>
</dbReference>
<dbReference type="GO" id="GO:0071555">
    <property type="term" value="P:cell wall organization"/>
    <property type="evidence" value="ECO:0007669"/>
    <property type="project" value="UniProtKB-KW"/>
</dbReference>
<dbReference type="GO" id="GO:0009252">
    <property type="term" value="P:peptidoglycan biosynthetic process"/>
    <property type="evidence" value="ECO:0007669"/>
    <property type="project" value="UniProtKB-KW"/>
</dbReference>
<dbReference type="GO" id="GO:0008360">
    <property type="term" value="P:regulation of cell shape"/>
    <property type="evidence" value="ECO:0007669"/>
    <property type="project" value="UniProtKB-KW"/>
</dbReference>
<dbReference type="GO" id="GO:0046677">
    <property type="term" value="P:response to antibiotic"/>
    <property type="evidence" value="ECO:0007669"/>
    <property type="project" value="UniProtKB-UniRule"/>
</dbReference>
<dbReference type="HAMAP" id="MF_01006">
    <property type="entry name" value="Undec_diphosphatase"/>
    <property type="match status" value="1"/>
</dbReference>
<dbReference type="InterPro" id="IPR003824">
    <property type="entry name" value="UppP"/>
</dbReference>
<dbReference type="NCBIfam" id="NF001390">
    <property type="entry name" value="PRK00281.1-4"/>
    <property type="match status" value="1"/>
</dbReference>
<dbReference type="NCBIfam" id="TIGR00753">
    <property type="entry name" value="undec_PP_bacA"/>
    <property type="match status" value="1"/>
</dbReference>
<dbReference type="PANTHER" id="PTHR30622">
    <property type="entry name" value="UNDECAPRENYL-DIPHOSPHATASE"/>
    <property type="match status" value="1"/>
</dbReference>
<dbReference type="PANTHER" id="PTHR30622:SF3">
    <property type="entry name" value="UNDECAPRENYL-DIPHOSPHATASE"/>
    <property type="match status" value="1"/>
</dbReference>
<dbReference type="Pfam" id="PF02673">
    <property type="entry name" value="BacA"/>
    <property type="match status" value="1"/>
</dbReference>
<organism>
    <name type="scientific">Staphylococcus aureus (strain Mu50 / ATCC 700699)</name>
    <dbReference type="NCBI Taxonomy" id="158878"/>
    <lineage>
        <taxon>Bacteria</taxon>
        <taxon>Bacillati</taxon>
        <taxon>Bacillota</taxon>
        <taxon>Bacilli</taxon>
        <taxon>Bacillales</taxon>
        <taxon>Staphylococcaceae</taxon>
        <taxon>Staphylococcus</taxon>
    </lineage>
</organism>
<reference key="1">
    <citation type="journal article" date="2001" name="Lancet">
        <title>Whole genome sequencing of meticillin-resistant Staphylococcus aureus.</title>
        <authorList>
            <person name="Kuroda M."/>
            <person name="Ohta T."/>
            <person name="Uchiyama I."/>
            <person name="Baba T."/>
            <person name="Yuzawa H."/>
            <person name="Kobayashi I."/>
            <person name="Cui L."/>
            <person name="Oguchi A."/>
            <person name="Aoki K."/>
            <person name="Nagai Y."/>
            <person name="Lian J.-Q."/>
            <person name="Ito T."/>
            <person name="Kanamori M."/>
            <person name="Matsumaru H."/>
            <person name="Maruyama A."/>
            <person name="Murakami H."/>
            <person name="Hosoyama A."/>
            <person name="Mizutani-Ui Y."/>
            <person name="Takahashi N.K."/>
            <person name="Sawano T."/>
            <person name="Inoue R."/>
            <person name="Kaito C."/>
            <person name="Sekimizu K."/>
            <person name="Hirakawa H."/>
            <person name="Kuhara S."/>
            <person name="Goto S."/>
            <person name="Yabuzaki J."/>
            <person name="Kanehisa M."/>
            <person name="Yamashita A."/>
            <person name="Oshima K."/>
            <person name="Furuya K."/>
            <person name="Yoshino C."/>
            <person name="Shiba T."/>
            <person name="Hattori M."/>
            <person name="Ogasawara N."/>
            <person name="Hayashi H."/>
            <person name="Hiramatsu K."/>
        </authorList>
    </citation>
    <scope>NUCLEOTIDE SEQUENCE [LARGE SCALE GENOMIC DNA]</scope>
    <source>
        <strain>Mu50 / ATCC 700699</strain>
    </source>
</reference>
<accession>P67390</accession>
<accession>Q99VT8</accession>
<gene>
    <name evidence="1" type="primary">uppP</name>
    <name type="synonym">bacA</name>
    <name type="synonym">upk</name>
    <name type="ordered locus">SAV0683</name>
</gene>